<gene>
    <name evidence="1" type="primary">ruvA</name>
    <name type="ordered locus">Smlt3711</name>
</gene>
<protein>
    <recommendedName>
        <fullName evidence="1">Holliday junction branch migration complex subunit RuvA</fullName>
    </recommendedName>
</protein>
<dbReference type="EMBL" id="AM743169">
    <property type="protein sequence ID" value="CAQ47126.1"/>
    <property type="molecule type" value="Genomic_DNA"/>
</dbReference>
<dbReference type="RefSeq" id="WP_005410756.1">
    <property type="nucleotide sequence ID" value="NC_010943.1"/>
</dbReference>
<dbReference type="SMR" id="B2FRN6"/>
<dbReference type="EnsemblBacteria" id="CAQ47126">
    <property type="protein sequence ID" value="CAQ47126"/>
    <property type="gene ID" value="Smlt3711"/>
</dbReference>
<dbReference type="GeneID" id="93834702"/>
<dbReference type="KEGG" id="sml:Smlt3711"/>
<dbReference type="eggNOG" id="COG0632">
    <property type="taxonomic scope" value="Bacteria"/>
</dbReference>
<dbReference type="HOGENOM" id="CLU_087936_0_0_6"/>
<dbReference type="Proteomes" id="UP000008840">
    <property type="component" value="Chromosome"/>
</dbReference>
<dbReference type="GO" id="GO:0005737">
    <property type="term" value="C:cytoplasm"/>
    <property type="evidence" value="ECO:0007669"/>
    <property type="project" value="UniProtKB-SubCell"/>
</dbReference>
<dbReference type="GO" id="GO:0009379">
    <property type="term" value="C:Holliday junction helicase complex"/>
    <property type="evidence" value="ECO:0007669"/>
    <property type="project" value="InterPro"/>
</dbReference>
<dbReference type="GO" id="GO:0048476">
    <property type="term" value="C:Holliday junction resolvase complex"/>
    <property type="evidence" value="ECO:0007669"/>
    <property type="project" value="UniProtKB-UniRule"/>
</dbReference>
<dbReference type="GO" id="GO:0005524">
    <property type="term" value="F:ATP binding"/>
    <property type="evidence" value="ECO:0007669"/>
    <property type="project" value="InterPro"/>
</dbReference>
<dbReference type="GO" id="GO:0000400">
    <property type="term" value="F:four-way junction DNA binding"/>
    <property type="evidence" value="ECO:0007669"/>
    <property type="project" value="UniProtKB-UniRule"/>
</dbReference>
<dbReference type="GO" id="GO:0009378">
    <property type="term" value="F:four-way junction helicase activity"/>
    <property type="evidence" value="ECO:0007669"/>
    <property type="project" value="InterPro"/>
</dbReference>
<dbReference type="GO" id="GO:0006310">
    <property type="term" value="P:DNA recombination"/>
    <property type="evidence" value="ECO:0007669"/>
    <property type="project" value="UniProtKB-UniRule"/>
</dbReference>
<dbReference type="GO" id="GO:0006281">
    <property type="term" value="P:DNA repair"/>
    <property type="evidence" value="ECO:0007669"/>
    <property type="project" value="UniProtKB-UniRule"/>
</dbReference>
<dbReference type="CDD" id="cd14332">
    <property type="entry name" value="UBA_RuvA_C"/>
    <property type="match status" value="1"/>
</dbReference>
<dbReference type="Gene3D" id="1.10.150.20">
    <property type="entry name" value="5' to 3' exonuclease, C-terminal subdomain"/>
    <property type="match status" value="1"/>
</dbReference>
<dbReference type="Gene3D" id="1.10.8.10">
    <property type="entry name" value="DNA helicase RuvA subunit, C-terminal domain"/>
    <property type="match status" value="1"/>
</dbReference>
<dbReference type="Gene3D" id="2.40.50.140">
    <property type="entry name" value="Nucleic acid-binding proteins"/>
    <property type="match status" value="1"/>
</dbReference>
<dbReference type="HAMAP" id="MF_00031">
    <property type="entry name" value="DNA_HJ_migration_RuvA"/>
    <property type="match status" value="1"/>
</dbReference>
<dbReference type="InterPro" id="IPR013849">
    <property type="entry name" value="DNA_helicase_Holl-junc_RuvA_I"/>
</dbReference>
<dbReference type="InterPro" id="IPR003583">
    <property type="entry name" value="Hlx-hairpin-Hlx_DNA-bd_motif"/>
</dbReference>
<dbReference type="InterPro" id="IPR012340">
    <property type="entry name" value="NA-bd_OB-fold"/>
</dbReference>
<dbReference type="InterPro" id="IPR000085">
    <property type="entry name" value="RuvA"/>
</dbReference>
<dbReference type="InterPro" id="IPR010994">
    <property type="entry name" value="RuvA_2-like"/>
</dbReference>
<dbReference type="InterPro" id="IPR011114">
    <property type="entry name" value="RuvA_C"/>
</dbReference>
<dbReference type="InterPro" id="IPR036267">
    <property type="entry name" value="RuvA_C_sf"/>
</dbReference>
<dbReference type="NCBIfam" id="TIGR00084">
    <property type="entry name" value="ruvA"/>
    <property type="match status" value="1"/>
</dbReference>
<dbReference type="Pfam" id="PF14520">
    <property type="entry name" value="HHH_5"/>
    <property type="match status" value="1"/>
</dbReference>
<dbReference type="Pfam" id="PF07499">
    <property type="entry name" value="RuvA_C"/>
    <property type="match status" value="1"/>
</dbReference>
<dbReference type="Pfam" id="PF01330">
    <property type="entry name" value="RuvA_N"/>
    <property type="match status" value="1"/>
</dbReference>
<dbReference type="SMART" id="SM00278">
    <property type="entry name" value="HhH1"/>
    <property type="match status" value="2"/>
</dbReference>
<dbReference type="SUPFAM" id="SSF46929">
    <property type="entry name" value="DNA helicase RuvA subunit, C-terminal domain"/>
    <property type="match status" value="1"/>
</dbReference>
<dbReference type="SUPFAM" id="SSF50249">
    <property type="entry name" value="Nucleic acid-binding proteins"/>
    <property type="match status" value="1"/>
</dbReference>
<dbReference type="SUPFAM" id="SSF47781">
    <property type="entry name" value="RuvA domain 2-like"/>
    <property type="match status" value="1"/>
</dbReference>
<comment type="function">
    <text evidence="1">The RuvA-RuvB-RuvC complex processes Holliday junction (HJ) DNA during genetic recombination and DNA repair, while the RuvA-RuvB complex plays an important role in the rescue of blocked DNA replication forks via replication fork reversal (RFR). RuvA specifically binds to HJ cruciform DNA, conferring on it an open structure. The RuvB hexamer acts as an ATP-dependent pump, pulling dsDNA into and through the RuvAB complex. HJ branch migration allows RuvC to scan DNA until it finds its consensus sequence, where it cleaves and resolves the cruciform DNA.</text>
</comment>
<comment type="subunit">
    <text evidence="1">Homotetramer. Forms an RuvA(8)-RuvB(12)-Holliday junction (HJ) complex. HJ DNA is sandwiched between 2 RuvA tetramers; dsDNA enters through RuvA and exits via RuvB. An RuvB hexamer assembles on each DNA strand where it exits the tetramer. Each RuvB hexamer is contacted by two RuvA subunits (via domain III) on 2 adjacent RuvB subunits; this complex drives branch migration. In the full resolvosome a probable DNA-RuvA(4)-RuvB(12)-RuvC(2) complex forms which resolves the HJ.</text>
</comment>
<comment type="subcellular location">
    <subcellularLocation>
        <location evidence="1">Cytoplasm</location>
    </subcellularLocation>
</comment>
<comment type="domain">
    <text evidence="1">Has three domains with a flexible linker between the domains II and III and assumes an 'L' shape. Domain III is highly mobile and contacts RuvB.</text>
</comment>
<comment type="similarity">
    <text evidence="1">Belongs to the RuvA family.</text>
</comment>
<name>RUVA_STRMK</name>
<reference key="1">
    <citation type="journal article" date="2008" name="Genome Biol.">
        <title>The complete genome, comparative and functional analysis of Stenotrophomonas maltophilia reveals an organism heavily shielded by drug resistance determinants.</title>
        <authorList>
            <person name="Crossman L.C."/>
            <person name="Gould V.C."/>
            <person name="Dow J.M."/>
            <person name="Vernikos G.S."/>
            <person name="Okazaki A."/>
            <person name="Sebaihia M."/>
            <person name="Saunders D."/>
            <person name="Arrowsmith C."/>
            <person name="Carver T."/>
            <person name="Peters N."/>
            <person name="Adlem E."/>
            <person name="Kerhornou A."/>
            <person name="Lord A."/>
            <person name="Murphy L."/>
            <person name="Seeger K."/>
            <person name="Squares R."/>
            <person name="Rutter S."/>
            <person name="Quail M.A."/>
            <person name="Rajandream M.A."/>
            <person name="Harris D."/>
            <person name="Churcher C."/>
            <person name="Bentley S.D."/>
            <person name="Parkhill J."/>
            <person name="Thomson N.R."/>
            <person name="Avison M.B."/>
        </authorList>
    </citation>
    <scope>NUCLEOTIDE SEQUENCE [LARGE SCALE GENOMIC DNA]</scope>
    <source>
        <strain>K279a</strain>
    </source>
</reference>
<organism>
    <name type="scientific">Stenotrophomonas maltophilia (strain K279a)</name>
    <dbReference type="NCBI Taxonomy" id="522373"/>
    <lineage>
        <taxon>Bacteria</taxon>
        <taxon>Pseudomonadati</taxon>
        <taxon>Pseudomonadota</taxon>
        <taxon>Gammaproteobacteria</taxon>
        <taxon>Lysobacterales</taxon>
        <taxon>Lysobacteraceae</taxon>
        <taxon>Stenotrophomonas</taxon>
        <taxon>Stenotrophomonas maltophilia group</taxon>
    </lineage>
</organism>
<accession>B2FRN6</accession>
<proteinExistence type="inferred from homology"/>
<evidence type="ECO:0000255" key="1">
    <source>
        <dbReference type="HAMAP-Rule" id="MF_00031"/>
    </source>
</evidence>
<sequence>MIGRLRGIVAYKAPPWLVVDVNGVGYELEAPMSTFYDLPELGREVTLYTHYSQKEDSVSLYGFLREGERRLFRDVQKVSGIGAKIALAVLSGVTVEEFARMVQAGDITALTRIPGIGKKTAERMVLELRDRAAQFGAGGALPTGSGPAPADPLSDATVALQQLGYKPAEAARMARDAFNEGDEVATVIRKALQSALR</sequence>
<feature type="chain" id="PRO_1000090374" description="Holliday junction branch migration complex subunit RuvA">
    <location>
        <begin position="1"/>
        <end position="197"/>
    </location>
</feature>
<feature type="region of interest" description="Domain I" evidence="1">
    <location>
        <begin position="1"/>
        <end position="64"/>
    </location>
</feature>
<feature type="region of interest" description="Domain II" evidence="1">
    <location>
        <begin position="65"/>
        <end position="143"/>
    </location>
</feature>
<feature type="region of interest" description="Flexible linker" evidence="1">
    <location>
        <begin position="144"/>
        <end position="153"/>
    </location>
</feature>
<feature type="region of interest" description="Domain III" evidence="1">
    <location>
        <begin position="153"/>
        <end position="197"/>
    </location>
</feature>
<keyword id="KW-0963">Cytoplasm</keyword>
<keyword id="KW-0227">DNA damage</keyword>
<keyword id="KW-0233">DNA recombination</keyword>
<keyword id="KW-0234">DNA repair</keyword>
<keyword id="KW-0238">DNA-binding</keyword>
<keyword id="KW-1185">Reference proteome</keyword>